<protein>
    <recommendedName>
        <fullName>Envelope glycoprotein</fullName>
    </recommendedName>
    <alternativeName>
        <fullName>Env polyprotein</fullName>
    </alternativeName>
    <component>
        <recommendedName>
            <fullName>Surface protein</fullName>
            <shortName>SU</shortName>
        </recommendedName>
        <alternativeName>
            <fullName>Glycoprotein 90</fullName>
            <shortName>gp90</shortName>
        </alternativeName>
    </component>
    <component>
        <recommendedName>
            <fullName>Transmembrane protein</fullName>
            <shortName>TM</shortName>
        </recommendedName>
        <alternativeName>
            <fullName>Glycoprotein 45</fullName>
            <shortName>gp45</shortName>
        </alternativeName>
    </component>
</protein>
<gene>
    <name type="primary">env</name>
</gene>
<evidence type="ECO:0000250" key="1"/>
<evidence type="ECO:0000255" key="2"/>
<evidence type="ECO:0000256" key="3">
    <source>
        <dbReference type="SAM" id="MobiDB-lite"/>
    </source>
</evidence>
<proteinExistence type="inferred from homology"/>
<dbReference type="EMBL" id="M18387">
    <property type="protein sequence ID" value="AAA66409.1"/>
    <property type="molecule type" value="Genomic_RNA"/>
</dbReference>
<dbReference type="PIR" id="C34027">
    <property type="entry name" value="VCLJE3"/>
</dbReference>
<dbReference type="GlyCosmos" id="P22429">
    <property type="glycosylation" value="18 sites, No reported glycans"/>
</dbReference>
<dbReference type="GO" id="GO:0020002">
    <property type="term" value="C:host cell plasma membrane"/>
    <property type="evidence" value="ECO:0007669"/>
    <property type="project" value="UniProtKB-SubCell"/>
</dbReference>
<dbReference type="GO" id="GO:0016020">
    <property type="term" value="C:membrane"/>
    <property type="evidence" value="ECO:0007669"/>
    <property type="project" value="UniProtKB-KW"/>
</dbReference>
<dbReference type="GO" id="GO:0019031">
    <property type="term" value="C:viral envelope"/>
    <property type="evidence" value="ECO:0007669"/>
    <property type="project" value="UniProtKB-KW"/>
</dbReference>
<dbReference type="GO" id="GO:0055036">
    <property type="term" value="C:virion membrane"/>
    <property type="evidence" value="ECO:0007669"/>
    <property type="project" value="UniProtKB-SubCell"/>
</dbReference>
<dbReference type="GO" id="GO:0005198">
    <property type="term" value="F:structural molecule activity"/>
    <property type="evidence" value="ECO:0007669"/>
    <property type="project" value="InterPro"/>
</dbReference>
<dbReference type="GO" id="GO:0046718">
    <property type="term" value="P:symbiont entry into host cell"/>
    <property type="evidence" value="ECO:0007669"/>
    <property type="project" value="UniProtKB-KW"/>
</dbReference>
<dbReference type="GO" id="GO:0019062">
    <property type="term" value="P:virion attachment to host cell"/>
    <property type="evidence" value="ECO:0007669"/>
    <property type="project" value="UniProtKB-KW"/>
</dbReference>
<dbReference type="CDD" id="cd09909">
    <property type="entry name" value="HIV-1-like_HR1-HR2"/>
    <property type="match status" value="1"/>
</dbReference>
<dbReference type="InterPro" id="IPR000328">
    <property type="entry name" value="GP41-like"/>
</dbReference>
<dbReference type="InterPro" id="IPR001361">
    <property type="entry name" value="Gp90_EIAV"/>
</dbReference>
<dbReference type="Pfam" id="PF00971">
    <property type="entry name" value="EIAV_GP90"/>
    <property type="match status" value="1"/>
</dbReference>
<dbReference type="Pfam" id="PF00517">
    <property type="entry name" value="GP41"/>
    <property type="match status" value="1"/>
</dbReference>
<comment type="function">
    <text evidence="1">The surface protein (SU) attaches the virus to the host cell by binding to its receptor. This interaction triggers the refolding of the transmembrane protein (TM) and is thought to activate its fusogenic potential by unmasking its fusion peptide. Fusion occurs at the host cell plasma membrane (By similarity).</text>
</comment>
<comment type="function">
    <text evidence="1">The transmembrane protein (TM) acts as a class I viral fusion protein. Under the current model, the protein has at least 3 conformational states: pre-fusion native state, pre-hairpin intermediate state, and post-fusion hairpin state. During viral and target cell membrane fusion, the coiled coil regions (heptad repeats) assume a trimer-of-hairpins structure, positioning the fusion peptide in close proximity to the C-terminal region of the ectodomain. The formation of this structure appears to drive apposition and subsequent fusion of viral and target cell membranes. Membranes fusion leads to delivery of the nucleocapsid into the cytoplasm (By similarity).</text>
</comment>
<comment type="subunit">
    <text evidence="1">The mature envelope protein (Env) consists of a trimer of SU-TM heterodimers attached by noncovalent interactions or by a labile interchain disulfide bond.</text>
</comment>
<comment type="subcellular location">
    <molecule>Transmembrane protein</molecule>
    <subcellularLocation>
        <location evidence="1">Virion membrane</location>
        <topology evidence="1">Single-pass type I membrane protein</topology>
    </subcellularLocation>
    <subcellularLocation>
        <location evidence="1">Host cell membrane</location>
        <topology evidence="1">Single-pass type I membrane protein</topology>
    </subcellularLocation>
    <text evidence="1">It is probably concentrated at the site of budding and incorporated into the virions possibly by contacts between the cytoplasmic tail of Env and the N-terminus of Gag.</text>
</comment>
<comment type="subcellular location">
    <molecule>Surface protein</molecule>
    <subcellularLocation>
        <location evidence="1">Virion membrane</location>
        <topology evidence="1">Peripheral membrane protein</topology>
    </subcellularLocation>
    <subcellularLocation>
        <location evidence="1">Host cell membrane</location>
        <topology evidence="1">Peripheral membrane protein</topology>
    </subcellularLocation>
    <text evidence="1">The surface protein is not anchored to the viral envelope, but associates with the extravirion surface through its binding to TM. It is probably concentrated at the site of budding and incorporated into the virions possibly by contacts between the cytoplasmic tail of Env and the N-terminus of Gag (By similarity).</text>
</comment>
<comment type="PTM">
    <text evidence="1">Specific enzymatic cleavages in vivo yield mature proteins. Envelope glycoproteins are synthesized as an inactive precursor that is N-glycosylated and processed likely by host cell furin or by a furin-like protease in the Golgi to yield the mature SU and TM proteins. The cleavage site between SU and TM requires the minimal sequence [KR]-X-[KR]-R (By similarity).</text>
</comment>
<sequence>MVSIAFYGGIPGGISTPITQQSEKSKCEENTMFQPYCYNNDSKNSMAESKEARDQEMNLKEESKEEKRRNDWWEIGMFLLCLAGTTGGILWWYEGLPQQHYIGLVAIGGRLNGSGQSNAIECWGSFPGCRPFQNYFSYETNRSMHMDNNTATLLEAYHREIAFIYKSSCTDSDHCQEYQCKKVNLNSSDSSNSVRVEDVTNTAEYWGFKWLECNQTEHFKTILVPENEMVNINDTDTWIPKGCNETWARVKRCPIDILYGIHPIRLCVQPPFFLVQEKGIADTSRIGNCGPTIFLGVLEDNKGVVRGDYTACNVRRLNINRKDYTGIYQVPIFYTCTFTNITSCNNEPIISVIMYETNQVQYLLCNNNNSNNYNCVVQSFGVIGQAHLELPRPNKRIRNQSFNQYNCSINNKTELETWNLVNTSGLTPLPISSEANTGLIRHKRDFGISAIVAAIVAATAIAASATMSYVALTEVNKIMEVQNHTFEVENSTLNGMDLIERQIKILYAMILQTHADVQLLKERQQVEETFNLIGCIERTHVFCHTGHPWNMSWGHLNESTQWDDWVSKMEDLNQEILTTLHGARNNLAQSMITFNTPDSIAQFGKDLWSHIGNWIPGLGASIIKYIVMFLLIYLLLTSSPKILRALWKVTSGAGSSGSRYLKKKFHHKHASREDTWDQAQHSIHLAGVTGGSGDKYYKQKYSRNDWNGESEEYNRRPKSWVKSIEAFGESYISEKTKGEISQPGAAINEHKNGSGGNNPHQGSLDLEIRSEGGNIYDCCIKAQEGTLAIPCCGFPLWLFWGLVIIVGRIAGYGLRGLAVIIRICIRGLNLIFEIIRKMLDYIGRALNPGTSHVSMPQYV</sequence>
<reference key="1">
    <citation type="journal article" date="1987" name="Virology">
        <title>Antigenic variation and lentivirus persistence: variations in envelope gene sequences during EIAV infection resemble changes reported for sequential isolates of HIV.</title>
        <authorList>
            <person name="Payne S.L."/>
            <person name="Fang F.D."/>
            <person name="Liu C.P."/>
            <person name="Dhruva B.R."/>
            <person name="Rwambo P."/>
            <person name="Issel C.J."/>
            <person name="Montelaro R.C."/>
        </authorList>
    </citation>
    <scope>NUCLEOTIDE SEQUENCE [GENOMIC RNA]</scope>
</reference>
<organismHost>
    <name type="scientific">Equus asinus</name>
    <name type="common">Donkey</name>
    <name type="synonym">Equus africanus asinus</name>
    <dbReference type="NCBI Taxonomy" id="9793"/>
</organismHost>
<organismHost>
    <name type="scientific">Equus caballus</name>
    <name type="common">Horse</name>
    <dbReference type="NCBI Taxonomy" id="9796"/>
</organismHost>
<name>ENV_EIAV3</name>
<organism>
    <name type="scientific">Equine infectious anemia virus (isolate P3.2-3)</name>
    <name type="common">EIAV</name>
    <dbReference type="NCBI Taxonomy" id="11668"/>
    <lineage>
        <taxon>Viruses</taxon>
        <taxon>Riboviria</taxon>
        <taxon>Pararnavirae</taxon>
        <taxon>Artverviricota</taxon>
        <taxon>Revtraviricetes</taxon>
        <taxon>Ortervirales</taxon>
        <taxon>Retroviridae</taxon>
        <taxon>Orthoretrovirinae</taxon>
        <taxon>Lentivirus</taxon>
        <taxon>Equine infectious anemia virus</taxon>
    </lineage>
</organism>
<keyword id="KW-0165">Cleavage on pair of basic residues</keyword>
<keyword id="KW-0175">Coiled coil</keyword>
<keyword id="KW-1015">Disulfide bond</keyword>
<keyword id="KW-0325">Glycoprotein</keyword>
<keyword id="KW-1032">Host cell membrane</keyword>
<keyword id="KW-1043">Host membrane</keyword>
<keyword id="KW-0945">Host-virus interaction</keyword>
<keyword id="KW-0472">Membrane</keyword>
<keyword id="KW-0812">Transmembrane</keyword>
<keyword id="KW-1133">Transmembrane helix</keyword>
<keyword id="KW-1161">Viral attachment to host cell</keyword>
<keyword id="KW-0261">Viral envelope protein</keyword>
<keyword id="KW-0946">Virion</keyword>
<keyword id="KW-1160">Virus entry into host cell</keyword>
<accession>P22429</accession>
<feature type="propeptide" id="PRO_0000239529" evidence="1">
    <location>
        <begin position="1"/>
        <end position="6"/>
    </location>
</feature>
<feature type="chain" id="PRO_0000038708" description="Envelope glycoprotein">
    <location>
        <begin position="7"/>
        <end position="859"/>
    </location>
</feature>
<feature type="chain" id="PRO_0000038709" description="Surface protein" evidence="1">
    <location>
        <begin position="7"/>
        <end position="444"/>
    </location>
</feature>
<feature type="chain" id="PRO_0000038710" description="Transmembrane protein" evidence="1">
    <location>
        <begin position="445"/>
        <end position="859"/>
    </location>
</feature>
<feature type="topological domain" description="Extracellular" evidence="2">
    <location>
        <begin position="7"/>
        <end position="614"/>
    </location>
</feature>
<feature type="transmembrane region" description="Helical" evidence="2">
    <location>
        <begin position="615"/>
        <end position="635"/>
    </location>
</feature>
<feature type="topological domain" description="Cytoplasmic" evidence="2">
    <location>
        <begin position="636"/>
        <end position="859"/>
    </location>
</feature>
<feature type="region of interest" description="Fusion peptide" evidence="2">
    <location>
        <begin position="446"/>
        <end position="466"/>
    </location>
</feature>
<feature type="region of interest" description="Immunosuppression" evidence="1">
    <location>
        <begin position="498"/>
        <end position="513"/>
    </location>
</feature>
<feature type="region of interest" description="Disordered" evidence="3">
    <location>
        <begin position="745"/>
        <end position="764"/>
    </location>
</feature>
<feature type="coiled-coil region" evidence="2">
    <location>
        <begin position="576"/>
        <end position="624"/>
    </location>
</feature>
<feature type="coiled-coil region" evidence="2">
    <location>
        <begin position="663"/>
        <end position="699"/>
    </location>
</feature>
<feature type="site" description="Cleavage; by host" evidence="1">
    <location>
        <begin position="444"/>
        <end position="445"/>
    </location>
</feature>
<feature type="site" description="Cleavage" evidence="1">
    <location>
        <begin position="684"/>
        <end position="685"/>
    </location>
</feature>
<feature type="glycosylation site" description="N-linked (GlcNAc...) asparagine; by host" evidence="2">
    <location>
        <position position="40"/>
    </location>
</feature>
<feature type="glycosylation site" description="N-linked (GlcNAc...) asparagine; by host" evidence="2">
    <location>
        <position position="112"/>
    </location>
</feature>
<feature type="glycosylation site" description="N-linked (GlcNAc...) asparagine; by host" evidence="2">
    <location>
        <position position="141"/>
    </location>
</feature>
<feature type="glycosylation site" description="N-linked (GlcNAc...) asparagine; by host" evidence="2">
    <location>
        <position position="148"/>
    </location>
</feature>
<feature type="glycosylation site" description="N-linked (GlcNAc...) asparagine; by host" evidence="2">
    <location>
        <position position="186"/>
    </location>
</feature>
<feature type="glycosylation site" description="N-linked (GlcNAc...) asparagine; by host" evidence="2">
    <location>
        <position position="214"/>
    </location>
</feature>
<feature type="glycosylation site" description="N-linked (GlcNAc...) asparagine; by host" evidence="2">
    <location>
        <position position="233"/>
    </location>
</feature>
<feature type="glycosylation site" description="N-linked (GlcNAc...) asparagine; by host" evidence="2">
    <location>
        <position position="244"/>
    </location>
</feature>
<feature type="glycosylation site" description="N-linked (GlcNAc...) asparagine; by host" evidence="2">
    <location>
        <position position="340"/>
    </location>
</feature>
<feature type="glycosylation site" description="N-linked (GlcNAc...) asparagine; by host" evidence="2">
    <location>
        <position position="368"/>
    </location>
</feature>
<feature type="glycosylation site" description="N-linked (GlcNAc...) asparagine; by host" evidence="2">
    <location>
        <position position="399"/>
    </location>
</feature>
<feature type="glycosylation site" description="N-linked (GlcNAc...) asparagine; by host" evidence="2">
    <location>
        <position position="406"/>
    </location>
</feature>
<feature type="glycosylation site" description="N-linked (GlcNAc...) asparagine; by host" evidence="2">
    <location>
        <position position="411"/>
    </location>
</feature>
<feature type="glycosylation site" description="N-linked (GlcNAc...) asparagine; by host" evidence="2">
    <location>
        <position position="422"/>
    </location>
</feature>
<feature type="glycosylation site" description="N-linked (GlcNAc...) asparagine; by host" evidence="2">
    <location>
        <position position="483"/>
    </location>
</feature>
<feature type="glycosylation site" description="N-linked (GlcNAc...) asparagine; by host" evidence="2">
    <location>
        <position position="490"/>
    </location>
</feature>
<feature type="glycosylation site" description="N-linked (GlcNAc...) asparagine; by host" evidence="2">
    <location>
        <position position="550"/>
    </location>
</feature>
<feature type="glycosylation site" description="N-linked (GlcNAc...) asparagine; by host" evidence="2">
    <location>
        <position position="557"/>
    </location>
</feature>